<dbReference type="EMBL" id="AF344445">
    <property type="protein sequence ID" value="AAK28967.1"/>
    <property type="molecule type" value="mRNA"/>
</dbReference>
<dbReference type="EMBL" id="AC002332">
    <property type="protein sequence ID" value="AAB80647.1"/>
    <property type="molecule type" value="Genomic_DNA"/>
</dbReference>
<dbReference type="EMBL" id="CP002685">
    <property type="protein sequence ID" value="AEC08810.1"/>
    <property type="molecule type" value="Genomic_DNA"/>
</dbReference>
<dbReference type="EMBL" id="CP002685">
    <property type="protein sequence ID" value="ANM61886.1"/>
    <property type="molecule type" value="Genomic_DNA"/>
</dbReference>
<dbReference type="EMBL" id="CP002685">
    <property type="protein sequence ID" value="ANM61887.1"/>
    <property type="molecule type" value="Genomic_DNA"/>
</dbReference>
<dbReference type="EMBL" id="CP002685">
    <property type="protein sequence ID" value="ANM61888.1"/>
    <property type="molecule type" value="Genomic_DNA"/>
</dbReference>
<dbReference type="PIR" id="F84743">
    <property type="entry name" value="F84743"/>
</dbReference>
<dbReference type="RefSeq" id="NP_001318341.1">
    <property type="nucleotide sequence ID" value="NM_001336444.1"/>
</dbReference>
<dbReference type="RefSeq" id="NP_001324077.1">
    <property type="nucleotide sequence ID" value="NM_001336445.1"/>
</dbReference>
<dbReference type="RefSeq" id="NP_001324078.1">
    <property type="nucleotide sequence ID" value="NM_001336446.1"/>
</dbReference>
<dbReference type="RefSeq" id="NP_180887.1">
    <property type="nucleotide sequence ID" value="NM_128889.3"/>
</dbReference>
<dbReference type="SMR" id="O22781"/>
<dbReference type="BioGRID" id="3239">
    <property type="interactions" value="36"/>
</dbReference>
<dbReference type="DIP" id="DIP-62059N"/>
<dbReference type="FunCoup" id="O22781">
    <property type="interactions" value="56"/>
</dbReference>
<dbReference type="IntAct" id="O22781">
    <property type="interactions" value="37"/>
</dbReference>
<dbReference type="STRING" id="3702.O22781"/>
<dbReference type="PaxDb" id="3702-AT2G33290.1"/>
<dbReference type="ProteomicsDB" id="226519"/>
<dbReference type="EnsemblPlants" id="AT2G33290.1">
    <property type="protein sequence ID" value="AT2G33290.1"/>
    <property type="gene ID" value="AT2G33290"/>
</dbReference>
<dbReference type="EnsemblPlants" id="AT2G33290.2">
    <property type="protein sequence ID" value="AT2G33290.2"/>
    <property type="gene ID" value="AT2G33290"/>
</dbReference>
<dbReference type="EnsemblPlants" id="AT2G33290.3">
    <property type="protein sequence ID" value="AT2G33290.3"/>
    <property type="gene ID" value="AT2G33290"/>
</dbReference>
<dbReference type="EnsemblPlants" id="AT2G33290.4">
    <property type="protein sequence ID" value="AT2G33290.4"/>
    <property type="gene ID" value="AT2G33290"/>
</dbReference>
<dbReference type="GeneID" id="817892"/>
<dbReference type="Gramene" id="AT2G33290.1">
    <property type="protein sequence ID" value="AT2G33290.1"/>
    <property type="gene ID" value="AT2G33290"/>
</dbReference>
<dbReference type="Gramene" id="AT2G33290.2">
    <property type="protein sequence ID" value="AT2G33290.2"/>
    <property type="gene ID" value="AT2G33290"/>
</dbReference>
<dbReference type="Gramene" id="AT2G33290.3">
    <property type="protein sequence ID" value="AT2G33290.3"/>
    <property type="gene ID" value="AT2G33290"/>
</dbReference>
<dbReference type="Gramene" id="AT2G33290.4">
    <property type="protein sequence ID" value="AT2G33290.4"/>
    <property type="gene ID" value="AT2G33290"/>
</dbReference>
<dbReference type="KEGG" id="ath:AT2G33290"/>
<dbReference type="Araport" id="AT2G33290"/>
<dbReference type="TAIR" id="AT2G33290">
    <property type="gene designation" value="SUVH2"/>
</dbReference>
<dbReference type="eggNOG" id="KOG1082">
    <property type="taxonomic scope" value="Eukaryota"/>
</dbReference>
<dbReference type="HOGENOM" id="CLU_004556_4_0_1"/>
<dbReference type="InParanoid" id="O22781"/>
<dbReference type="OMA" id="HYEYIAK"/>
<dbReference type="PhylomeDB" id="O22781"/>
<dbReference type="BRENDA" id="2.1.1.368">
    <property type="organism ID" value="399"/>
</dbReference>
<dbReference type="PRO" id="PR:O22781"/>
<dbReference type="Proteomes" id="UP000006548">
    <property type="component" value="Chromosome 2"/>
</dbReference>
<dbReference type="ExpressionAtlas" id="O22781">
    <property type="expression patterns" value="baseline and differential"/>
</dbReference>
<dbReference type="GO" id="GO:0000775">
    <property type="term" value="C:chromosome, centromeric region"/>
    <property type="evidence" value="ECO:0007669"/>
    <property type="project" value="UniProtKB-SubCell"/>
</dbReference>
<dbReference type="GO" id="GO:0000792">
    <property type="term" value="C:heterochromatin"/>
    <property type="evidence" value="ECO:0000314"/>
    <property type="project" value="TAIR"/>
</dbReference>
<dbReference type="GO" id="GO:0005634">
    <property type="term" value="C:nucleus"/>
    <property type="evidence" value="ECO:0000314"/>
    <property type="project" value="TAIR"/>
</dbReference>
<dbReference type="GO" id="GO:0003677">
    <property type="term" value="F:DNA binding"/>
    <property type="evidence" value="ECO:0007669"/>
    <property type="project" value="UniProtKB-KW"/>
</dbReference>
<dbReference type="GO" id="GO:0042054">
    <property type="term" value="F:histone methyltransferase activity"/>
    <property type="evidence" value="ECO:0000250"/>
    <property type="project" value="TAIR"/>
</dbReference>
<dbReference type="GO" id="GO:0008270">
    <property type="term" value="F:zinc ion binding"/>
    <property type="evidence" value="ECO:0007669"/>
    <property type="project" value="InterPro"/>
</dbReference>
<dbReference type="GO" id="GO:0040029">
    <property type="term" value="P:epigenetic regulation of gene expression"/>
    <property type="evidence" value="ECO:0000315"/>
    <property type="project" value="TAIR"/>
</dbReference>
<dbReference type="GO" id="GO:0080188">
    <property type="term" value="P:gene silencing by siRNA-directed DNA methylation"/>
    <property type="evidence" value="ECO:0000315"/>
    <property type="project" value="UniProtKB"/>
</dbReference>
<dbReference type="FunFam" id="2.30.280.10:FF:000003">
    <property type="entry name" value="Histone-lysine N-methyltransferase, H3 lysine-9 specific SUVH5"/>
    <property type="match status" value="1"/>
</dbReference>
<dbReference type="Gene3D" id="2.170.270.10">
    <property type="entry name" value="SET domain"/>
    <property type="match status" value="1"/>
</dbReference>
<dbReference type="Gene3D" id="2.30.280.10">
    <property type="entry name" value="SRA-YDG"/>
    <property type="match status" value="1"/>
</dbReference>
<dbReference type="InterPro" id="IPR025794">
    <property type="entry name" value="H3-K9-MeTrfase_plant"/>
</dbReference>
<dbReference type="InterPro" id="IPR051357">
    <property type="entry name" value="H3K9_HMTase_SUVAR3-9"/>
</dbReference>
<dbReference type="InterPro" id="IPR007728">
    <property type="entry name" value="Pre-SET_dom"/>
</dbReference>
<dbReference type="InterPro" id="IPR015947">
    <property type="entry name" value="PUA-like_sf"/>
</dbReference>
<dbReference type="InterPro" id="IPR001214">
    <property type="entry name" value="SET_dom"/>
</dbReference>
<dbReference type="InterPro" id="IPR046341">
    <property type="entry name" value="SET_dom_sf"/>
</dbReference>
<dbReference type="InterPro" id="IPR036987">
    <property type="entry name" value="SRA-YDG_sf"/>
</dbReference>
<dbReference type="InterPro" id="IPR003105">
    <property type="entry name" value="SRA_YDG"/>
</dbReference>
<dbReference type="PANTHER" id="PTHR45660:SF81">
    <property type="entry name" value="HISTONE-LYSINE N-METHYLTRANSFERASE FAMILY MEMBER SUVH2"/>
    <property type="match status" value="1"/>
</dbReference>
<dbReference type="PANTHER" id="PTHR45660">
    <property type="entry name" value="HISTONE-LYSINE N-METHYLTRANSFERASE SETMAR"/>
    <property type="match status" value="1"/>
</dbReference>
<dbReference type="Pfam" id="PF05033">
    <property type="entry name" value="Pre-SET"/>
    <property type="match status" value="1"/>
</dbReference>
<dbReference type="Pfam" id="PF02182">
    <property type="entry name" value="SAD_SRA"/>
    <property type="match status" value="1"/>
</dbReference>
<dbReference type="Pfam" id="PF00856">
    <property type="entry name" value="SET"/>
    <property type="match status" value="1"/>
</dbReference>
<dbReference type="SMART" id="SM00468">
    <property type="entry name" value="PreSET"/>
    <property type="match status" value="1"/>
</dbReference>
<dbReference type="SMART" id="SM00317">
    <property type="entry name" value="SET"/>
    <property type="match status" value="1"/>
</dbReference>
<dbReference type="SMART" id="SM00466">
    <property type="entry name" value="SRA"/>
    <property type="match status" value="1"/>
</dbReference>
<dbReference type="SUPFAM" id="SSF88697">
    <property type="entry name" value="PUA domain-like"/>
    <property type="match status" value="1"/>
</dbReference>
<dbReference type="SUPFAM" id="SSF82199">
    <property type="entry name" value="SET domain"/>
    <property type="match status" value="1"/>
</dbReference>
<dbReference type="PROSITE" id="PS50867">
    <property type="entry name" value="PRE_SET"/>
    <property type="match status" value="1"/>
</dbReference>
<dbReference type="PROSITE" id="PS51575">
    <property type="entry name" value="SAM_MT43_SUVAR39_2"/>
    <property type="match status" value="1"/>
</dbReference>
<dbReference type="PROSITE" id="PS50280">
    <property type="entry name" value="SET"/>
    <property type="match status" value="1"/>
</dbReference>
<dbReference type="PROSITE" id="PS51015">
    <property type="entry name" value="YDG"/>
    <property type="match status" value="1"/>
</dbReference>
<organism>
    <name type="scientific">Arabidopsis thaliana</name>
    <name type="common">Mouse-ear cress</name>
    <dbReference type="NCBI Taxonomy" id="3702"/>
    <lineage>
        <taxon>Eukaryota</taxon>
        <taxon>Viridiplantae</taxon>
        <taxon>Streptophyta</taxon>
        <taxon>Embryophyta</taxon>
        <taxon>Tracheophyta</taxon>
        <taxon>Spermatophyta</taxon>
        <taxon>Magnoliopsida</taxon>
        <taxon>eudicotyledons</taxon>
        <taxon>Gunneridae</taxon>
        <taxon>Pentapetalae</taxon>
        <taxon>rosids</taxon>
        <taxon>malvids</taxon>
        <taxon>Brassicales</taxon>
        <taxon>Brassicaceae</taxon>
        <taxon>Camelineae</taxon>
        <taxon>Arabidopsis</taxon>
    </lineage>
</organism>
<sequence>MSTLLPFPDLNLMPDSQSSTAGTTAGDTVVTGKLEVKSEPIEEWQTPPSSTSDQSANTDLIAEFIRISELFRSAFKPLQVKGLDGVSVYGLDSGAIVAVPEKENRELIEPPPGFKDNRVSTVVVSPKFERPRELARIAILGHEQRKELRQVMKRTRMTYESLRIHLMAESMKNHVLGQGRRRRSDMAAAYIMRDRGLWLNYDKHIVGPVTGVEVGDIFFYRMELCVLGLHGQTQAGIDCLTAERSATGEPIATSIVVSGGYEDDEDTGDVLVYTGHGGQDHQHKQCDNQRLVGGNLGMERSMHYGIEVRVIRGIKYENSISSKVYVYDGLYKIVDWWFAVGKSGFGVFKFRLVRIEGQPMMGSAVMRFAQTLRNKPSMVRPTGYVSFDLSNKKENVPVFLYNDVDGDQEPRHYEYIAKAVFPPGIFGQGGISRTGCECKLSCTDDCLCARKNGGEFAYDDNGHLLKGKHVVFECGEFCTCGPSCKSRVTQKGLRNRLEVFRSKETGWGVRTLDLIEAGAFICEYAGVVVTRLQAEILSMNGDVMVYPGRFTDQWRNWGDLSQVYPDFVRPNYPSLPPLDFSMDVSRMRNVACYISHSKEPNVMVQFVLHDHNHLMFPRVMLFALENISPLAELSLDYGLADEVNGKLAICN</sequence>
<protein>
    <recommendedName>
        <fullName>Histone-lysine N-methyltransferase family member SUVH2</fullName>
    </recommendedName>
    <alternativeName>
        <fullName>Cytosine-HMTase 2</fullName>
    </alternativeName>
    <alternativeName>
        <fullName>H3-K27-HMTase 2</fullName>
    </alternativeName>
    <alternativeName>
        <fullName>H4-K20-HMTase 2</fullName>
    </alternativeName>
    <alternativeName>
        <fullName>Histone H3-K9 methyltransferase 2</fullName>
        <shortName>H3-K9-HMTase 2</shortName>
    </alternativeName>
    <alternativeName>
        <fullName>Protein SET DOMAIN GROUP 3</fullName>
    </alternativeName>
    <alternativeName>
        <fullName>Suppressor of variegation 3-9 homolog protein 2</fullName>
        <shortName>Su(var)3-9 homolog protein 2</shortName>
    </alternativeName>
</protein>
<keyword id="KW-0137">Centromere</keyword>
<keyword id="KW-0156">Chromatin regulator</keyword>
<keyword id="KW-0158">Chromosome</keyword>
<keyword id="KW-0238">DNA-binding</keyword>
<keyword id="KW-0479">Metal-binding</keyword>
<keyword id="KW-0539">Nucleus</keyword>
<keyword id="KW-1185">Reference proteome</keyword>
<keyword id="KW-0862">Zinc</keyword>
<gene>
    <name type="primary">SUVH2</name>
    <name type="synonym">SDG3</name>
    <name type="synonym">SET3</name>
    <name type="ordered locus">At2g33290</name>
    <name type="ORF">F4P9.6</name>
</gene>
<reference key="1">
    <citation type="journal article" date="2001" name="Nucleic Acids Res.">
        <title>The Arabidopsis thaliana genome contains at least 29 active genes encoding SET domain proteins that can be assigned to four evolutionarily conserved classes.</title>
        <authorList>
            <person name="Baumbusch L.O."/>
            <person name="Thorstensen T."/>
            <person name="Krauss V."/>
            <person name="Fischer A."/>
            <person name="Naumann K."/>
            <person name="Assalkhou R."/>
            <person name="Schulz I."/>
            <person name="Reuter G."/>
            <person name="Aalen R.B."/>
        </authorList>
    </citation>
    <scope>NUCLEOTIDE SEQUENCE [MRNA]</scope>
    <scope>SUBCELLULAR LOCATION</scope>
    <scope>NOMENCLATURE</scope>
    <scope>TISSUE SPECIFICITY</scope>
</reference>
<reference key="2">
    <citation type="journal article" date="1999" name="Nature">
        <title>Sequence and analysis of chromosome 2 of the plant Arabidopsis thaliana.</title>
        <authorList>
            <person name="Lin X."/>
            <person name="Kaul S."/>
            <person name="Rounsley S.D."/>
            <person name="Shea T.P."/>
            <person name="Benito M.-I."/>
            <person name="Town C.D."/>
            <person name="Fujii C.Y."/>
            <person name="Mason T.M."/>
            <person name="Bowman C.L."/>
            <person name="Barnstead M.E."/>
            <person name="Feldblyum T.V."/>
            <person name="Buell C.R."/>
            <person name="Ketchum K.A."/>
            <person name="Lee J.J."/>
            <person name="Ronning C.M."/>
            <person name="Koo H.L."/>
            <person name="Moffat K.S."/>
            <person name="Cronin L.A."/>
            <person name="Shen M."/>
            <person name="Pai G."/>
            <person name="Van Aken S."/>
            <person name="Umayam L."/>
            <person name="Tallon L.J."/>
            <person name="Gill J.E."/>
            <person name="Adams M.D."/>
            <person name="Carrera A.J."/>
            <person name="Creasy T.H."/>
            <person name="Goodman H.M."/>
            <person name="Somerville C.R."/>
            <person name="Copenhaver G.P."/>
            <person name="Preuss D."/>
            <person name="Nierman W.C."/>
            <person name="White O."/>
            <person name="Eisen J.A."/>
            <person name="Salzberg S.L."/>
            <person name="Fraser C.M."/>
            <person name="Venter J.C."/>
        </authorList>
    </citation>
    <scope>NUCLEOTIDE SEQUENCE [LARGE SCALE GENOMIC DNA]</scope>
    <source>
        <strain>cv. Columbia</strain>
    </source>
</reference>
<reference key="3">
    <citation type="journal article" date="2017" name="Plant J.">
        <title>Araport11: a complete reannotation of the Arabidopsis thaliana reference genome.</title>
        <authorList>
            <person name="Cheng C.Y."/>
            <person name="Krishnakumar V."/>
            <person name="Chan A.P."/>
            <person name="Thibaud-Nissen F."/>
            <person name="Schobel S."/>
            <person name="Town C.D."/>
        </authorList>
    </citation>
    <scope>GENOME REANNOTATION</scope>
    <source>
        <strain>cv. Columbia</strain>
    </source>
</reference>
<reference key="4">
    <citation type="journal article" date="2005" name="EMBO J.">
        <title>Pivotal role of AtSUVH2 in heterochromatic histone methylation and gene silencing in Arabidopsis.</title>
        <authorList>
            <person name="Naumann K."/>
            <person name="Fischer A."/>
            <person name="Hofmann I."/>
            <person name="Krauss V."/>
            <person name="Phalke S."/>
            <person name="Irmler K."/>
            <person name="Hause G."/>
            <person name="Aurich A.-C."/>
            <person name="Dorn R."/>
            <person name="Jenuwein T."/>
            <person name="Reuter G."/>
        </authorList>
    </citation>
    <scope>FUNCTION</scope>
    <scope>SUBCELLULAR LOCATION</scope>
    <scope>MUTAGENESIS OF GLU-143; ARG-351; VAL-385; ARG-411; VAL-584; MET-620; LEU-630 AND GLY-645</scope>
</reference>
<reference key="5">
    <citation type="journal article" date="2006" name="J. Plant Physiol.">
        <title>Heterochromatin proteins and the control of heterochromatic gene silencing in Arabidopsis.</title>
        <authorList>
            <person name="Fischer A."/>
            <person name="Hofmann I."/>
            <person name="Naumann K."/>
            <person name="Reuter G."/>
        </authorList>
    </citation>
    <scope>FUNCTION</scope>
    <scope>GENE FAMILY</scope>
</reference>
<reference key="6">
    <citation type="journal article" date="2008" name="PLoS Genet.">
        <title>SRA-domain proteins required for DRM2-mediated de novo DNA methylation.</title>
        <authorList>
            <person name="Johnson L.M."/>
            <person name="Law J.A."/>
            <person name="Khattar A."/>
            <person name="Henderson I.R."/>
            <person name="Jacobsen S.E."/>
        </authorList>
    </citation>
    <scope>FUNCTION</scope>
    <scope>DNA-BINDING</scope>
    <scope>LACK OF METHYLTRANSFERASE ACTIVITY</scope>
    <scope>LACK OF S-ADENOSYL-L-METHIONINE BINDING</scope>
</reference>
<reference key="7">
    <citation type="journal article" date="2014" name="Nature">
        <title>SRA- and SET-domain-containing proteins link RNA polymerase V occupancy to DNA methylation.</title>
        <authorList>
            <person name="Johnson L.M."/>
            <person name="Du J."/>
            <person name="Hale C.J."/>
            <person name="Bischof S."/>
            <person name="Feng S."/>
            <person name="Chodavarapu R.K."/>
            <person name="Zhong X."/>
            <person name="Marson G."/>
            <person name="Pellegrini M."/>
            <person name="Segal D.J."/>
            <person name="Patel D.J."/>
            <person name="Jacobsen S.E."/>
        </authorList>
    </citation>
    <scope>FUNCTION</scope>
    <scope>INTERACTION WITH NRPE1 AND DRD1</scope>
</reference>
<reference key="8">
    <citation type="journal article" date="2014" name="PLoS Genet.">
        <title>The SET domain proteins SUVH2 and SUVH9 are required for Pol V occupancy at RNA-directed DNA methylation loci.</title>
        <authorList>
            <person name="Liu Z.-W."/>
            <person name="Shao C.-R."/>
            <person name="Zhang C.-J."/>
            <person name="Zhou J.-X."/>
            <person name="Zhang S.-W."/>
            <person name="Li L."/>
            <person name="Chen S."/>
            <person name="Huang H.-W."/>
            <person name="Cai T."/>
            <person name="He X.-J."/>
        </authorList>
    </citation>
    <scope>INTERACTION WITH MORC1/CRT1; DRD1 AND DMS3</scope>
    <scope>SELF-INTERACTION</scope>
    <source>
        <strain>cv. Columbia</strain>
    </source>
</reference>
<reference key="9">
    <citation type="journal article" date="2016" name="PLoS Genet.">
        <title>Two components of the RNA-Directed DNA methylation pathway associate with MORC6 and silence loci targeted by MORC6 in Arabidopsis.</title>
        <authorList>
            <person name="Liu Z.-W."/>
            <person name="Zhou J.-X."/>
            <person name="Huang H.-W."/>
            <person name="Li Y.-Q."/>
            <person name="Shao C.-R."/>
            <person name="Li L."/>
            <person name="Cai T."/>
            <person name="Chen S."/>
            <person name="He X.-J."/>
        </authorList>
    </citation>
    <scope>FUNCTION</scope>
    <scope>DISRUPTION PHENOTYPE</scope>
</reference>
<proteinExistence type="evidence at protein level"/>
<name>SUVH2_ARATH</name>
<evidence type="ECO:0000250" key="1"/>
<evidence type="ECO:0000255" key="2">
    <source>
        <dbReference type="PROSITE-ProRule" id="PRU00157"/>
    </source>
</evidence>
<evidence type="ECO:0000255" key="3">
    <source>
        <dbReference type="PROSITE-ProRule" id="PRU00190"/>
    </source>
</evidence>
<evidence type="ECO:0000255" key="4">
    <source>
        <dbReference type="PROSITE-ProRule" id="PRU00358"/>
    </source>
</evidence>
<evidence type="ECO:0000255" key="5">
    <source>
        <dbReference type="PROSITE-ProRule" id="PRU00908"/>
    </source>
</evidence>
<evidence type="ECO:0000256" key="6">
    <source>
        <dbReference type="SAM" id="MobiDB-lite"/>
    </source>
</evidence>
<evidence type="ECO:0000269" key="7">
    <source>
    </source>
</evidence>
<evidence type="ECO:0000269" key="8">
    <source>
    </source>
</evidence>
<evidence type="ECO:0000269" key="9">
    <source>
    </source>
</evidence>
<evidence type="ECO:0000269" key="10">
    <source>
    </source>
</evidence>
<evidence type="ECO:0000269" key="11">
    <source>
    </source>
</evidence>
<evidence type="ECO:0000269" key="12">
    <source>
    </source>
</evidence>
<evidence type="ECO:0000269" key="13">
    <source>
    </source>
</evidence>
<feature type="chain" id="PRO_0000186073" description="Histone-lysine N-methyltransferase family member SUVH2">
    <location>
        <begin position="1"/>
        <end position="651"/>
    </location>
</feature>
<feature type="domain" description="YDG" evidence="4">
    <location>
        <begin position="202"/>
        <end position="358"/>
    </location>
</feature>
<feature type="domain" description="Pre-SET" evidence="2">
    <location>
        <begin position="434"/>
        <end position="492"/>
    </location>
</feature>
<feature type="domain" description="SET" evidence="3">
    <location>
        <begin position="495"/>
        <end position="638"/>
    </location>
</feature>
<feature type="region of interest" description="Disordered" evidence="6">
    <location>
        <begin position="1"/>
        <end position="28"/>
    </location>
</feature>
<feature type="compositionally biased region" description="Low complexity" evidence="6">
    <location>
        <begin position="15"/>
        <end position="28"/>
    </location>
</feature>
<feature type="binding site" evidence="1">
    <location>
        <position position="436"/>
    </location>
    <ligand>
        <name>Zn(2+)</name>
        <dbReference type="ChEBI" id="CHEBI:29105"/>
        <label>1</label>
    </ligand>
</feature>
<feature type="binding site" evidence="1">
    <location>
        <position position="436"/>
    </location>
    <ligand>
        <name>Zn(2+)</name>
        <dbReference type="ChEBI" id="CHEBI:29105"/>
        <label>2</label>
    </ligand>
</feature>
<feature type="binding site" evidence="1">
    <location>
        <position position="438"/>
    </location>
    <ligand>
        <name>Zn(2+)</name>
        <dbReference type="ChEBI" id="CHEBI:29105"/>
        <label>1</label>
    </ligand>
</feature>
<feature type="binding site" evidence="1">
    <location>
        <position position="442"/>
    </location>
    <ligand>
        <name>Zn(2+)</name>
        <dbReference type="ChEBI" id="CHEBI:29105"/>
        <label>1</label>
    </ligand>
</feature>
<feature type="binding site" evidence="1">
    <location>
        <position position="442"/>
    </location>
    <ligand>
        <name>Zn(2+)</name>
        <dbReference type="ChEBI" id="CHEBI:29105"/>
        <label>3</label>
    </ligand>
</feature>
<feature type="binding site" evidence="1">
    <location>
        <position position="446"/>
    </location>
    <ligand>
        <name>Zn(2+)</name>
        <dbReference type="ChEBI" id="CHEBI:29105"/>
        <label>1</label>
    </ligand>
</feature>
<feature type="binding site" evidence="1">
    <location>
        <position position="448"/>
    </location>
    <ligand>
        <name>Zn(2+)</name>
        <dbReference type="ChEBI" id="CHEBI:29105"/>
        <label>2</label>
    </ligand>
</feature>
<feature type="binding site" evidence="1">
    <location>
        <position position="474"/>
    </location>
    <ligand>
        <name>Zn(2+)</name>
        <dbReference type="ChEBI" id="CHEBI:29105"/>
        <label>2</label>
    </ligand>
</feature>
<feature type="binding site" evidence="1">
    <location>
        <position position="474"/>
    </location>
    <ligand>
        <name>Zn(2+)</name>
        <dbReference type="ChEBI" id="CHEBI:29105"/>
        <label>3</label>
    </ligand>
</feature>
<feature type="binding site" evidence="1">
    <location>
        <position position="478"/>
    </location>
    <ligand>
        <name>Zn(2+)</name>
        <dbReference type="ChEBI" id="CHEBI:29105"/>
        <label>2</label>
    </ligand>
</feature>
<feature type="binding site" evidence="1">
    <location>
        <position position="480"/>
    </location>
    <ligand>
        <name>Zn(2+)</name>
        <dbReference type="ChEBI" id="CHEBI:29105"/>
        <label>3</label>
    </ligand>
</feature>
<feature type="binding site" evidence="1">
    <location>
        <position position="484"/>
    </location>
    <ligand>
        <name>Zn(2+)</name>
        <dbReference type="ChEBI" id="CHEBI:29105"/>
        <label>3</label>
    </ligand>
</feature>
<feature type="mutagenesis site" description="In 5-1; ectopic nuclear localization." evidence="8">
    <original>E</original>
    <variation>D</variation>
    <location>
        <position position="143"/>
    </location>
</feature>
<feature type="mutagenesis site" description="In 5-2; loss of 5-methylcytosine, H3K9 dimethylation and H4K20 monomethylation." evidence="8">
    <original>R</original>
    <variation>K</variation>
    <location>
        <position position="351"/>
    </location>
</feature>
<feature type="mutagenesis site" description="In 5-3; loss of 5-methylcytosine, H3K9 dimethylation and H4K20 monomethylation." evidence="8">
    <original>V</original>
    <variation>A</variation>
    <location>
        <position position="385"/>
    </location>
</feature>
<feature type="mutagenesis site" description="In 5-4; loss of H3K9 and H4K20 methylation." evidence="8">
    <original>R</original>
    <variation>I</variation>
    <location>
        <position position="411"/>
    </location>
</feature>
<feature type="mutagenesis site" description="In 5-5; loss of H3K9 and H4K20 methylation." evidence="8">
    <original>V</original>
    <variation>G</variation>
    <location>
        <position position="584"/>
    </location>
</feature>
<feature type="mutagenesis site" description="In 5-6; loss of H3K9 and H4K20 methylation; when associated with T-630." evidence="8">
    <original>M</original>
    <variation>T</variation>
    <location>
        <position position="620"/>
    </location>
</feature>
<feature type="mutagenesis site" description="In 5-6; loss of H3K9 and H4K20 methylation; when associated with V-620." evidence="8">
    <original>L</original>
    <variation>V</variation>
    <location>
        <position position="630"/>
    </location>
</feature>
<feature type="mutagenesis site" description="In 5-7; loss of H3K9 and H4K20 methylation." evidence="8">
    <original>G</original>
    <variation>S</variation>
    <location>
        <position position="645"/>
    </location>
</feature>
<comment type="function">
    <text evidence="8 9 10 11 13">Histone methyltransferase family member that plays a central role in gene silencing (PubMed:15775980, PubMed:16384625, PubMed:19043555, PubMed:24463519, PubMed:27171427). Together with MORC6 and SUVH9, regulates the silencing of some transposable elements (TEs) (PubMed:27171427). According to PubMed:15775980, it is required for normal methylation of 'Lys-9' and 'Lys-27' of histone H3, 'Lys-20' of H4, and cytosine, but PubMed:19043555 see no significant effect on histone methylation when the gene is mutated. According to PubMed:19043555, the protein does not bind S-adenosyl-L-methionine and lacks methyltransferase activity. Instead, it may function downstream of DRM2 in RNA-directed DNA methylation, binding to methylated DNA and recruiting DNA-directed RNA polymerase V to chromatin (PubMed:24463519, PubMed:27171427).</text>
</comment>
<comment type="subunit">
    <text evidence="11 12">Self-interacts (PubMed:24465213). Interacts with DNA-directed RNA polymerase V subunit NRPE1 and with DRD1 and DMS3 (PubMed:24463519, PubMed:24465213). Binds to MORC1/CRT1 (PubMed:24465213).</text>
</comment>
<comment type="subcellular location">
    <subcellularLocation>
        <location>Nucleus</location>
    </subcellularLocation>
    <subcellularLocation>
        <location>Chromosome</location>
        <location>Centromere</location>
    </subcellularLocation>
    <text>Associates with centromeric constitutive heterochromatin.</text>
</comment>
<comment type="tissue specificity">
    <text evidence="7">Expressed at low levels in leaves stems and flowers.</text>
</comment>
<comment type="domain">
    <text>Although both SET and pre-SET domains are present, the absence of the post-SET domain may explain the lack of methyltransferase activity. Besides, the Cys residues in the SET domain that normally bind a zinc ion are not conserved.</text>
</comment>
<comment type="domain">
    <text evidence="1">In the pre-SET domain, Cys residues bind 3 zinc ions that are arranged in a triangular cluster; some of these Cys residues contribute to the binding of two zinc ions within the cluster.</text>
</comment>
<comment type="disruption phenotype">
    <text evidence="13">Impaired gene silencing due to decondensation of chromocenters leading to the derepression of DNA-methylated genes and transposable elements (TEs).</text>
</comment>
<comment type="similarity">
    <text evidence="5">Belongs to the class V-like SAM-binding methyltransferase superfamily. Histone-lysine methyltransferase family. Suvar3-9 subfamily.</text>
</comment>
<accession>O22781</accession>